<gene>
    <name type="primary">LCR44</name>
    <name type="ordered locus">At3g06985</name>
    <name type="ORF">F17A9</name>
</gene>
<sequence>MNCKIEFMSFLVMTSIVILFLFVSGKVEAEPQCIGSCEMLADCNTACIRMGYLFGQCVGWKTPDMCCCNH</sequence>
<accession>P82759</accession>
<evidence type="ECO:0000250" key="1"/>
<evidence type="ECO:0000255" key="2"/>
<evidence type="ECO:0000305" key="3"/>
<keyword id="KW-0929">Antimicrobial</keyword>
<keyword id="KW-1015">Disulfide bond</keyword>
<keyword id="KW-0295">Fungicide</keyword>
<keyword id="KW-0611">Plant defense</keyword>
<keyword id="KW-1185">Reference proteome</keyword>
<keyword id="KW-0964">Secreted</keyword>
<keyword id="KW-0732">Signal</keyword>
<feature type="signal peptide" evidence="2">
    <location>
        <begin position="1"/>
        <end position="29"/>
    </location>
</feature>
<feature type="chain" id="PRO_0000017283" description="Putative defensin-like protein 73">
    <location>
        <begin position="30"/>
        <end position="70"/>
    </location>
</feature>
<feature type="disulfide bond" evidence="1">
    <location>
        <begin position="33"/>
        <end position="68"/>
    </location>
</feature>
<feature type="disulfide bond" evidence="1">
    <location>
        <begin position="37"/>
        <end position="57"/>
    </location>
</feature>
<feature type="disulfide bond" evidence="1">
    <location>
        <begin position="43"/>
        <end position="66"/>
    </location>
</feature>
<feature type="disulfide bond" evidence="1">
    <location>
        <begin position="47"/>
        <end position="67"/>
    </location>
</feature>
<dbReference type="EMBL" id="AC016827">
    <property type="status" value="NOT_ANNOTATED_CDS"/>
    <property type="molecule type" value="Genomic_DNA"/>
</dbReference>
<dbReference type="EMBL" id="CP002686">
    <property type="protein sequence ID" value="AEE74484.1"/>
    <property type="molecule type" value="Genomic_DNA"/>
</dbReference>
<dbReference type="RefSeq" id="NP_001030652.1">
    <property type="nucleotide sequence ID" value="NM_001035575.2"/>
</dbReference>
<dbReference type="SMR" id="P82759"/>
<dbReference type="PaxDb" id="3702-AT3G06985.1"/>
<dbReference type="ProteomicsDB" id="224618"/>
<dbReference type="EnsemblPlants" id="AT3G06985.1">
    <property type="protein sequence ID" value="AT3G06985.1"/>
    <property type="gene ID" value="AT3G06985"/>
</dbReference>
<dbReference type="GeneID" id="3768831"/>
<dbReference type="Gramene" id="AT3G06985.1">
    <property type="protein sequence ID" value="AT3G06985.1"/>
    <property type="gene ID" value="AT3G06985"/>
</dbReference>
<dbReference type="KEGG" id="ath:AT3G06985"/>
<dbReference type="Araport" id="AT3G06985"/>
<dbReference type="TAIR" id="AT3G06985">
    <property type="gene designation" value="LCR44"/>
</dbReference>
<dbReference type="HOGENOM" id="CLU_2761219_0_0_1"/>
<dbReference type="InParanoid" id="P82759"/>
<dbReference type="OMA" id="YLFGQCV"/>
<dbReference type="PhylomeDB" id="P82759"/>
<dbReference type="PRO" id="PR:P82759"/>
<dbReference type="Proteomes" id="UP000006548">
    <property type="component" value="Chromosome 3"/>
</dbReference>
<dbReference type="ExpressionAtlas" id="P82759">
    <property type="expression patterns" value="baseline"/>
</dbReference>
<dbReference type="GO" id="GO:0005576">
    <property type="term" value="C:extracellular region"/>
    <property type="evidence" value="ECO:0007669"/>
    <property type="project" value="UniProtKB-SubCell"/>
</dbReference>
<dbReference type="GO" id="GO:0050832">
    <property type="term" value="P:defense response to fungus"/>
    <property type="evidence" value="ECO:0007669"/>
    <property type="project" value="UniProtKB-KW"/>
</dbReference>
<dbReference type="GO" id="GO:0031640">
    <property type="term" value="P:killing of cells of another organism"/>
    <property type="evidence" value="ECO:0007669"/>
    <property type="project" value="UniProtKB-KW"/>
</dbReference>
<name>DEF73_ARATH</name>
<proteinExistence type="inferred from homology"/>
<comment type="subcellular location">
    <subcellularLocation>
        <location evidence="1">Secreted</location>
    </subcellularLocation>
</comment>
<comment type="similarity">
    <text evidence="3">Belongs to the DEFL family.</text>
</comment>
<organism evidence="3">
    <name type="scientific">Arabidopsis thaliana</name>
    <name type="common">Mouse-ear cress</name>
    <dbReference type="NCBI Taxonomy" id="3702"/>
    <lineage>
        <taxon>Eukaryota</taxon>
        <taxon>Viridiplantae</taxon>
        <taxon>Streptophyta</taxon>
        <taxon>Embryophyta</taxon>
        <taxon>Tracheophyta</taxon>
        <taxon>Spermatophyta</taxon>
        <taxon>Magnoliopsida</taxon>
        <taxon>eudicotyledons</taxon>
        <taxon>Gunneridae</taxon>
        <taxon>Pentapetalae</taxon>
        <taxon>rosids</taxon>
        <taxon>malvids</taxon>
        <taxon>Brassicales</taxon>
        <taxon>Brassicaceae</taxon>
        <taxon>Camelineae</taxon>
        <taxon>Arabidopsis</taxon>
    </lineage>
</organism>
<reference evidence="3" key="1">
    <citation type="journal article" date="2000" name="Nature">
        <title>Sequence and analysis of chromosome 3 of the plant Arabidopsis thaliana.</title>
        <authorList>
            <person name="Salanoubat M."/>
            <person name="Lemcke K."/>
            <person name="Rieger M."/>
            <person name="Ansorge W."/>
            <person name="Unseld M."/>
            <person name="Fartmann B."/>
            <person name="Valle G."/>
            <person name="Bloecker H."/>
            <person name="Perez-Alonso M."/>
            <person name="Obermaier B."/>
            <person name="Delseny M."/>
            <person name="Boutry M."/>
            <person name="Grivell L.A."/>
            <person name="Mache R."/>
            <person name="Puigdomenech P."/>
            <person name="De Simone V."/>
            <person name="Choisne N."/>
            <person name="Artiguenave F."/>
            <person name="Robert C."/>
            <person name="Brottier P."/>
            <person name="Wincker P."/>
            <person name="Cattolico L."/>
            <person name="Weissenbach J."/>
            <person name="Saurin W."/>
            <person name="Quetier F."/>
            <person name="Schaefer M."/>
            <person name="Mueller-Auer S."/>
            <person name="Gabel C."/>
            <person name="Fuchs M."/>
            <person name="Benes V."/>
            <person name="Wurmbach E."/>
            <person name="Drzonek H."/>
            <person name="Erfle H."/>
            <person name="Jordan N."/>
            <person name="Bangert S."/>
            <person name="Wiedelmann R."/>
            <person name="Kranz H."/>
            <person name="Voss H."/>
            <person name="Holland R."/>
            <person name="Brandt P."/>
            <person name="Nyakatura G."/>
            <person name="Vezzi A."/>
            <person name="D'Angelo M."/>
            <person name="Pallavicini A."/>
            <person name="Toppo S."/>
            <person name="Simionati B."/>
            <person name="Conrad A."/>
            <person name="Hornischer K."/>
            <person name="Kauer G."/>
            <person name="Loehnert T.-H."/>
            <person name="Nordsiek G."/>
            <person name="Reichelt J."/>
            <person name="Scharfe M."/>
            <person name="Schoen O."/>
            <person name="Bargues M."/>
            <person name="Terol J."/>
            <person name="Climent J."/>
            <person name="Navarro P."/>
            <person name="Collado C."/>
            <person name="Perez-Perez A."/>
            <person name="Ottenwaelder B."/>
            <person name="Duchemin D."/>
            <person name="Cooke R."/>
            <person name="Laudie M."/>
            <person name="Berger-Llauro C."/>
            <person name="Purnelle B."/>
            <person name="Masuy D."/>
            <person name="de Haan M."/>
            <person name="Maarse A.C."/>
            <person name="Alcaraz J.-P."/>
            <person name="Cottet A."/>
            <person name="Casacuberta E."/>
            <person name="Monfort A."/>
            <person name="Argiriou A."/>
            <person name="Flores M."/>
            <person name="Liguori R."/>
            <person name="Vitale D."/>
            <person name="Mannhaupt G."/>
            <person name="Haase D."/>
            <person name="Schoof H."/>
            <person name="Rudd S."/>
            <person name="Zaccaria P."/>
            <person name="Mewes H.-W."/>
            <person name="Mayer K.F.X."/>
            <person name="Kaul S."/>
            <person name="Town C.D."/>
            <person name="Koo H.L."/>
            <person name="Tallon L.J."/>
            <person name="Jenkins J."/>
            <person name="Rooney T."/>
            <person name="Rizzo M."/>
            <person name="Walts A."/>
            <person name="Utterback T."/>
            <person name="Fujii C.Y."/>
            <person name="Shea T.P."/>
            <person name="Creasy T.H."/>
            <person name="Haas B."/>
            <person name="Maiti R."/>
            <person name="Wu D."/>
            <person name="Peterson J."/>
            <person name="Van Aken S."/>
            <person name="Pai G."/>
            <person name="Militscher J."/>
            <person name="Sellers P."/>
            <person name="Gill J.E."/>
            <person name="Feldblyum T.V."/>
            <person name="Preuss D."/>
            <person name="Lin X."/>
            <person name="Nierman W.C."/>
            <person name="Salzberg S.L."/>
            <person name="White O."/>
            <person name="Venter J.C."/>
            <person name="Fraser C.M."/>
            <person name="Kaneko T."/>
            <person name="Nakamura Y."/>
            <person name="Sato S."/>
            <person name="Kato T."/>
            <person name="Asamizu E."/>
            <person name="Sasamoto S."/>
            <person name="Kimura T."/>
            <person name="Idesawa K."/>
            <person name="Kawashima K."/>
            <person name="Kishida Y."/>
            <person name="Kiyokawa C."/>
            <person name="Kohara M."/>
            <person name="Matsumoto M."/>
            <person name="Matsuno A."/>
            <person name="Muraki A."/>
            <person name="Nakayama S."/>
            <person name="Nakazaki N."/>
            <person name="Shinpo S."/>
            <person name="Takeuchi C."/>
            <person name="Wada T."/>
            <person name="Watanabe A."/>
            <person name="Yamada M."/>
            <person name="Yasuda M."/>
            <person name="Tabata S."/>
        </authorList>
    </citation>
    <scope>NUCLEOTIDE SEQUENCE [LARGE SCALE GENOMIC DNA]</scope>
    <source>
        <strain>cv. Columbia</strain>
    </source>
</reference>
<reference key="2">
    <citation type="journal article" date="2017" name="Plant J.">
        <title>Araport11: a complete reannotation of the Arabidopsis thaliana reference genome.</title>
        <authorList>
            <person name="Cheng C.Y."/>
            <person name="Krishnakumar V."/>
            <person name="Chan A.P."/>
            <person name="Thibaud-Nissen F."/>
            <person name="Schobel S."/>
            <person name="Town C.D."/>
        </authorList>
    </citation>
    <scope>GENOME REANNOTATION</scope>
    <source>
        <strain>cv. Columbia</strain>
    </source>
</reference>
<reference evidence="3" key="3">
    <citation type="journal article" date="2001" name="Plant Mol. Biol.">
        <title>Two large Arabidopsis thaliana gene families are homologous to the Brassica gene superfamily that encodes pollen coat proteins and the male component of the self-incompatibility response.</title>
        <authorList>
            <person name="Vanoosthuyse V."/>
            <person name="Miege C."/>
            <person name="Dumas C."/>
            <person name="Cock J.M."/>
        </authorList>
    </citation>
    <scope>IDENTIFICATION</scope>
</reference>
<reference key="4">
    <citation type="journal article" date="2005" name="Plant Physiol.">
        <title>Genome organization of more than 300 defensin-like genes in Arabidopsis.</title>
        <authorList>
            <person name="Silverstein K.A.T."/>
            <person name="Graham M.A."/>
            <person name="Paape T.D."/>
            <person name="VandenBosch K.A."/>
        </authorList>
    </citation>
    <scope>GENE FAMILY</scope>
</reference>
<protein>
    <recommendedName>
        <fullName>Putative defensin-like protein 73</fullName>
    </recommendedName>
    <alternativeName>
        <fullName>Putative low-molecular-weight cysteine-rich protein 44</fullName>
        <shortName>Protein LCR44</shortName>
    </alternativeName>
</protein>